<accession>B6JAK6</accession>
<accession>F8BS11</accession>
<reference key="1">
    <citation type="journal article" date="2008" name="J. Bacteriol.">
        <title>Genome sequence of the chemolithoautotrophic bacterium Oligotropha carboxidovorans OM5T.</title>
        <authorList>
            <person name="Paul D."/>
            <person name="Bridges S."/>
            <person name="Burgess S.C."/>
            <person name="Dandass Y."/>
            <person name="Lawrence M.L."/>
        </authorList>
    </citation>
    <scope>NUCLEOTIDE SEQUENCE [LARGE SCALE GENOMIC DNA]</scope>
    <source>
        <strain>ATCC 49405 / DSM 1227 / KCTC 32145 / OM5</strain>
    </source>
</reference>
<reference key="2">
    <citation type="journal article" date="2011" name="J. Bacteriol.">
        <title>Complete genome sequences of the chemolithoautotrophic Oligotropha carboxidovorans strains OM4 and OM5.</title>
        <authorList>
            <person name="Volland S."/>
            <person name="Rachinger M."/>
            <person name="Strittmatter A."/>
            <person name="Daniel R."/>
            <person name="Gottschalk G."/>
            <person name="Meyer O."/>
        </authorList>
    </citation>
    <scope>NUCLEOTIDE SEQUENCE [LARGE SCALE GENOMIC DNA]</scope>
    <source>
        <strain>ATCC 49405 / DSM 1227 / KCTC 32145 / OM5</strain>
    </source>
</reference>
<keyword id="KW-0418">Kinase</keyword>
<keyword id="KW-0547">Nucleotide-binding</keyword>
<keyword id="KW-1185">Reference proteome</keyword>
<keyword id="KW-0723">Serine/threonine-protein kinase</keyword>
<keyword id="KW-0808">Transferase</keyword>
<feature type="chain" id="PRO_1000149712" description="Putative pyruvate, phosphate dikinase regulatory protein">
    <location>
        <begin position="1"/>
        <end position="283"/>
    </location>
</feature>
<feature type="binding site" evidence="1">
    <location>
        <begin position="154"/>
        <end position="161"/>
    </location>
    <ligand>
        <name>ADP</name>
        <dbReference type="ChEBI" id="CHEBI:456216"/>
    </ligand>
</feature>
<proteinExistence type="inferred from homology"/>
<comment type="function">
    <text evidence="1">Bifunctional serine/threonine kinase and phosphorylase involved in the regulation of the pyruvate, phosphate dikinase (PPDK) by catalyzing its phosphorylation/dephosphorylation.</text>
</comment>
<comment type="catalytic activity">
    <reaction evidence="1">
        <text>N(tele)-phospho-L-histidyl/L-threonyl-[pyruvate, phosphate dikinase] + ADP = N(tele)-phospho-L-histidyl/O-phospho-L-threonyl-[pyruvate, phosphate dikinase] + AMP + H(+)</text>
        <dbReference type="Rhea" id="RHEA:43692"/>
        <dbReference type="Rhea" id="RHEA-COMP:10650"/>
        <dbReference type="Rhea" id="RHEA-COMP:10651"/>
        <dbReference type="ChEBI" id="CHEBI:15378"/>
        <dbReference type="ChEBI" id="CHEBI:30013"/>
        <dbReference type="ChEBI" id="CHEBI:61977"/>
        <dbReference type="ChEBI" id="CHEBI:83586"/>
        <dbReference type="ChEBI" id="CHEBI:456215"/>
        <dbReference type="ChEBI" id="CHEBI:456216"/>
        <dbReference type="EC" id="2.7.11.32"/>
    </reaction>
</comment>
<comment type="catalytic activity">
    <reaction evidence="1">
        <text>N(tele)-phospho-L-histidyl/O-phospho-L-threonyl-[pyruvate, phosphate dikinase] + phosphate + H(+) = N(tele)-phospho-L-histidyl/L-threonyl-[pyruvate, phosphate dikinase] + diphosphate</text>
        <dbReference type="Rhea" id="RHEA:43696"/>
        <dbReference type="Rhea" id="RHEA-COMP:10650"/>
        <dbReference type="Rhea" id="RHEA-COMP:10651"/>
        <dbReference type="ChEBI" id="CHEBI:15378"/>
        <dbReference type="ChEBI" id="CHEBI:30013"/>
        <dbReference type="ChEBI" id="CHEBI:33019"/>
        <dbReference type="ChEBI" id="CHEBI:43474"/>
        <dbReference type="ChEBI" id="CHEBI:61977"/>
        <dbReference type="ChEBI" id="CHEBI:83586"/>
        <dbReference type="EC" id="2.7.4.27"/>
    </reaction>
</comment>
<comment type="similarity">
    <text evidence="1">Belongs to the pyruvate, phosphate/water dikinase regulatory protein family. PDRP subfamily.</text>
</comment>
<dbReference type="EC" id="2.7.11.32" evidence="1"/>
<dbReference type="EC" id="2.7.4.27" evidence="1"/>
<dbReference type="EMBL" id="CP001196">
    <property type="protein sequence ID" value="ACI91531.1"/>
    <property type="molecule type" value="Genomic_DNA"/>
</dbReference>
<dbReference type="EMBL" id="CP002826">
    <property type="protein sequence ID" value="AEI04878.1"/>
    <property type="molecule type" value="Genomic_DNA"/>
</dbReference>
<dbReference type="RefSeq" id="WP_012561562.1">
    <property type="nucleotide sequence ID" value="NC_015684.1"/>
</dbReference>
<dbReference type="SMR" id="B6JAK6"/>
<dbReference type="STRING" id="504832.OCA5_c01460"/>
<dbReference type="KEGG" id="oca:OCAR_4385"/>
<dbReference type="KEGG" id="ocg:OCA5_c01460"/>
<dbReference type="PATRIC" id="fig|504832.7.peg.153"/>
<dbReference type="eggNOG" id="COG1806">
    <property type="taxonomic scope" value="Bacteria"/>
</dbReference>
<dbReference type="HOGENOM" id="CLU_046206_2_0_5"/>
<dbReference type="OrthoDB" id="9782201at2"/>
<dbReference type="Proteomes" id="UP000007730">
    <property type="component" value="Chromosome"/>
</dbReference>
<dbReference type="GO" id="GO:0043531">
    <property type="term" value="F:ADP binding"/>
    <property type="evidence" value="ECO:0007669"/>
    <property type="project" value="UniProtKB-UniRule"/>
</dbReference>
<dbReference type="GO" id="GO:0005524">
    <property type="term" value="F:ATP binding"/>
    <property type="evidence" value="ECO:0007669"/>
    <property type="project" value="InterPro"/>
</dbReference>
<dbReference type="GO" id="GO:0016776">
    <property type="term" value="F:phosphotransferase activity, phosphate group as acceptor"/>
    <property type="evidence" value="ECO:0007669"/>
    <property type="project" value="UniProtKB-UniRule"/>
</dbReference>
<dbReference type="GO" id="GO:0004674">
    <property type="term" value="F:protein serine/threonine kinase activity"/>
    <property type="evidence" value="ECO:0007669"/>
    <property type="project" value="UniProtKB-UniRule"/>
</dbReference>
<dbReference type="HAMAP" id="MF_00921">
    <property type="entry name" value="PDRP"/>
    <property type="match status" value="1"/>
</dbReference>
<dbReference type="InterPro" id="IPR005177">
    <property type="entry name" value="Kinase-pyrophosphorylase"/>
</dbReference>
<dbReference type="InterPro" id="IPR026565">
    <property type="entry name" value="PPDK_reg"/>
</dbReference>
<dbReference type="NCBIfam" id="NF003742">
    <property type="entry name" value="PRK05339.1"/>
    <property type="match status" value="1"/>
</dbReference>
<dbReference type="PANTHER" id="PTHR31756">
    <property type="entry name" value="PYRUVATE, PHOSPHATE DIKINASE REGULATORY PROTEIN 1, CHLOROPLASTIC"/>
    <property type="match status" value="1"/>
</dbReference>
<dbReference type="PANTHER" id="PTHR31756:SF3">
    <property type="entry name" value="PYRUVATE, PHOSPHATE DIKINASE REGULATORY PROTEIN 1, CHLOROPLASTIC"/>
    <property type="match status" value="1"/>
</dbReference>
<dbReference type="Pfam" id="PF03618">
    <property type="entry name" value="Kinase-PPPase"/>
    <property type="match status" value="1"/>
</dbReference>
<sequence>MAGTNKSYFHLHMISDSTGETLIMVARAVAAQYANVTPVEHVYPLVRSQKQLDRVLAEIEEAPGIVLFTLLEKDLVERVEATCKDMNIPSLSIIGPVMELFRAYLGRETSPRVGAQHTLNAEYFNRIDALNYTMMHDDGQHVEGLEEADVVLVGVSRTSKTPTSIYLANRGIRTANVPLVPGIPIPPQLETLKKPLVVSLHATPERLVQVRQNRLLGIGAGAPLPGRGEDSYIDSRSVAEEVAFARKLSAKYDWPLLDVTRRSIEETAAAVMKLYADRQRQHG</sequence>
<organism>
    <name type="scientific">Afipia carboxidovorans (strain ATCC 49405 / DSM 1227 / KCTC 32145 / OM5)</name>
    <name type="common">Oligotropha carboxidovorans</name>
    <dbReference type="NCBI Taxonomy" id="504832"/>
    <lineage>
        <taxon>Bacteria</taxon>
        <taxon>Pseudomonadati</taxon>
        <taxon>Pseudomonadota</taxon>
        <taxon>Alphaproteobacteria</taxon>
        <taxon>Hyphomicrobiales</taxon>
        <taxon>Nitrobacteraceae</taxon>
        <taxon>Afipia</taxon>
    </lineage>
</organism>
<evidence type="ECO:0000255" key="1">
    <source>
        <dbReference type="HAMAP-Rule" id="MF_00921"/>
    </source>
</evidence>
<name>PDRP_AFIC5</name>
<gene>
    <name type="ordered locus">OCA5_c01460</name>
    <name type="ordered locus">OCAR_4385</name>
</gene>
<protein>
    <recommendedName>
        <fullName evidence="1">Putative pyruvate, phosphate dikinase regulatory protein</fullName>
        <shortName evidence="1">PPDK regulatory protein</shortName>
        <ecNumber evidence="1">2.7.11.32</ecNumber>
        <ecNumber evidence="1">2.7.4.27</ecNumber>
    </recommendedName>
</protein>